<protein>
    <recommendedName>
        <fullName evidence="1">Nucleoside diphosphate kinase</fullName>
        <shortName evidence="1">NDK</shortName>
        <shortName evidence="1">NDP kinase</shortName>
        <ecNumber evidence="1">2.7.4.6</ecNumber>
    </recommendedName>
    <alternativeName>
        <fullName evidence="1">Nucleoside-2-P kinase</fullName>
    </alternativeName>
</protein>
<feature type="chain" id="PRO_1000026305" description="Nucleoside diphosphate kinase">
    <location>
        <begin position="1"/>
        <end position="137"/>
    </location>
</feature>
<feature type="active site" description="Pros-phosphohistidine intermediate" evidence="1">
    <location>
        <position position="115"/>
    </location>
</feature>
<feature type="binding site" evidence="1">
    <location>
        <position position="9"/>
    </location>
    <ligand>
        <name>ATP</name>
        <dbReference type="ChEBI" id="CHEBI:30616"/>
    </ligand>
</feature>
<feature type="binding site" evidence="1">
    <location>
        <position position="57"/>
    </location>
    <ligand>
        <name>ATP</name>
        <dbReference type="ChEBI" id="CHEBI:30616"/>
    </ligand>
</feature>
<feature type="binding site" evidence="1">
    <location>
        <position position="85"/>
    </location>
    <ligand>
        <name>ATP</name>
        <dbReference type="ChEBI" id="CHEBI:30616"/>
    </ligand>
</feature>
<feature type="binding site" evidence="1">
    <location>
        <position position="91"/>
    </location>
    <ligand>
        <name>ATP</name>
        <dbReference type="ChEBI" id="CHEBI:30616"/>
    </ligand>
</feature>
<feature type="binding site" evidence="1">
    <location>
        <position position="102"/>
    </location>
    <ligand>
        <name>ATP</name>
        <dbReference type="ChEBI" id="CHEBI:30616"/>
    </ligand>
</feature>
<feature type="binding site" evidence="1">
    <location>
        <position position="112"/>
    </location>
    <ligand>
        <name>ATP</name>
        <dbReference type="ChEBI" id="CHEBI:30616"/>
    </ligand>
</feature>
<proteinExistence type="inferred from homology"/>
<sequence length="137" mass="14962">MEQTLSIIKPDAVAKNVIGQILARFEAAGLRIAATKKTRLSRVDAEAFYAIHAERPFFKDLVDFMISGPVVVTVLEGENAMAKNRELMGATNPAEAEPGTIRADFADSIDANAVHGSDSVENAEIEINFFFAKREIH</sequence>
<evidence type="ECO:0000255" key="1">
    <source>
        <dbReference type="HAMAP-Rule" id="MF_00451"/>
    </source>
</evidence>
<dbReference type="EC" id="2.7.4.6" evidence="1"/>
<dbReference type="EMBL" id="AP009179">
    <property type="protein sequence ID" value="BAF72993.1"/>
    <property type="molecule type" value="Genomic_DNA"/>
</dbReference>
<dbReference type="RefSeq" id="WP_012083814.1">
    <property type="nucleotide sequence ID" value="NC_009663.1"/>
</dbReference>
<dbReference type="SMR" id="A6QBY4"/>
<dbReference type="STRING" id="387093.SUN_2052"/>
<dbReference type="KEGG" id="sun:SUN_2052"/>
<dbReference type="eggNOG" id="COG0105">
    <property type="taxonomic scope" value="Bacteria"/>
</dbReference>
<dbReference type="HOGENOM" id="CLU_060216_8_1_7"/>
<dbReference type="OrthoDB" id="9801161at2"/>
<dbReference type="Proteomes" id="UP000006378">
    <property type="component" value="Chromosome"/>
</dbReference>
<dbReference type="GO" id="GO:0005737">
    <property type="term" value="C:cytoplasm"/>
    <property type="evidence" value="ECO:0007669"/>
    <property type="project" value="UniProtKB-SubCell"/>
</dbReference>
<dbReference type="GO" id="GO:0005524">
    <property type="term" value="F:ATP binding"/>
    <property type="evidence" value="ECO:0007669"/>
    <property type="project" value="UniProtKB-UniRule"/>
</dbReference>
<dbReference type="GO" id="GO:0046872">
    <property type="term" value="F:metal ion binding"/>
    <property type="evidence" value="ECO:0007669"/>
    <property type="project" value="UniProtKB-KW"/>
</dbReference>
<dbReference type="GO" id="GO:0004550">
    <property type="term" value="F:nucleoside diphosphate kinase activity"/>
    <property type="evidence" value="ECO:0007669"/>
    <property type="project" value="UniProtKB-UniRule"/>
</dbReference>
<dbReference type="GO" id="GO:0006241">
    <property type="term" value="P:CTP biosynthetic process"/>
    <property type="evidence" value="ECO:0007669"/>
    <property type="project" value="UniProtKB-UniRule"/>
</dbReference>
<dbReference type="GO" id="GO:0006183">
    <property type="term" value="P:GTP biosynthetic process"/>
    <property type="evidence" value="ECO:0007669"/>
    <property type="project" value="UniProtKB-UniRule"/>
</dbReference>
<dbReference type="GO" id="GO:0006228">
    <property type="term" value="P:UTP biosynthetic process"/>
    <property type="evidence" value="ECO:0007669"/>
    <property type="project" value="UniProtKB-UniRule"/>
</dbReference>
<dbReference type="CDD" id="cd04413">
    <property type="entry name" value="NDPk_I"/>
    <property type="match status" value="1"/>
</dbReference>
<dbReference type="FunFam" id="3.30.70.141:FF:000001">
    <property type="entry name" value="Nucleoside diphosphate kinase"/>
    <property type="match status" value="1"/>
</dbReference>
<dbReference type="Gene3D" id="3.30.70.141">
    <property type="entry name" value="Nucleoside diphosphate kinase-like domain"/>
    <property type="match status" value="1"/>
</dbReference>
<dbReference type="HAMAP" id="MF_00451">
    <property type="entry name" value="NDP_kinase"/>
    <property type="match status" value="1"/>
</dbReference>
<dbReference type="InterPro" id="IPR034907">
    <property type="entry name" value="NDK-like_dom"/>
</dbReference>
<dbReference type="InterPro" id="IPR036850">
    <property type="entry name" value="NDK-like_dom_sf"/>
</dbReference>
<dbReference type="InterPro" id="IPR001564">
    <property type="entry name" value="Nucleoside_diP_kinase"/>
</dbReference>
<dbReference type="InterPro" id="IPR023005">
    <property type="entry name" value="Nucleoside_diP_kinase_AS"/>
</dbReference>
<dbReference type="NCBIfam" id="NF001908">
    <property type="entry name" value="PRK00668.1"/>
    <property type="match status" value="1"/>
</dbReference>
<dbReference type="PANTHER" id="PTHR11349">
    <property type="entry name" value="NUCLEOSIDE DIPHOSPHATE KINASE"/>
    <property type="match status" value="1"/>
</dbReference>
<dbReference type="Pfam" id="PF00334">
    <property type="entry name" value="NDK"/>
    <property type="match status" value="1"/>
</dbReference>
<dbReference type="PRINTS" id="PR01243">
    <property type="entry name" value="NUCDPKINASE"/>
</dbReference>
<dbReference type="SMART" id="SM00562">
    <property type="entry name" value="NDK"/>
    <property type="match status" value="1"/>
</dbReference>
<dbReference type="SUPFAM" id="SSF54919">
    <property type="entry name" value="Nucleoside diphosphate kinase, NDK"/>
    <property type="match status" value="1"/>
</dbReference>
<dbReference type="PROSITE" id="PS00469">
    <property type="entry name" value="NDPK"/>
    <property type="match status" value="1"/>
</dbReference>
<dbReference type="PROSITE" id="PS51374">
    <property type="entry name" value="NDPK_LIKE"/>
    <property type="match status" value="1"/>
</dbReference>
<reference key="1">
    <citation type="journal article" date="2007" name="Proc. Natl. Acad. Sci. U.S.A.">
        <title>Deep-sea vent epsilon-proteobacterial genomes provide insights into emergence of pathogens.</title>
        <authorList>
            <person name="Nakagawa S."/>
            <person name="Takaki Y."/>
            <person name="Shimamura S."/>
            <person name="Reysenbach A.-L."/>
            <person name="Takai K."/>
            <person name="Horikoshi K."/>
        </authorList>
    </citation>
    <scope>NUCLEOTIDE SEQUENCE [LARGE SCALE GENOMIC DNA]</scope>
    <source>
        <strain>NBC37-1</strain>
    </source>
</reference>
<organism>
    <name type="scientific">Sulfurovum sp. (strain NBC37-1)</name>
    <dbReference type="NCBI Taxonomy" id="387093"/>
    <lineage>
        <taxon>Bacteria</taxon>
        <taxon>Pseudomonadati</taxon>
        <taxon>Campylobacterota</taxon>
        <taxon>Epsilonproteobacteria</taxon>
        <taxon>Campylobacterales</taxon>
        <taxon>Sulfurovaceae</taxon>
        <taxon>Sulfurovum</taxon>
    </lineage>
</organism>
<keyword id="KW-0067">ATP-binding</keyword>
<keyword id="KW-0963">Cytoplasm</keyword>
<keyword id="KW-0418">Kinase</keyword>
<keyword id="KW-0460">Magnesium</keyword>
<keyword id="KW-0479">Metal-binding</keyword>
<keyword id="KW-0546">Nucleotide metabolism</keyword>
<keyword id="KW-0547">Nucleotide-binding</keyword>
<keyword id="KW-0597">Phosphoprotein</keyword>
<keyword id="KW-0808">Transferase</keyword>
<comment type="function">
    <text evidence="1">Major role in the synthesis of nucleoside triphosphates other than ATP. The ATP gamma phosphate is transferred to the NDP beta phosphate via a ping-pong mechanism, using a phosphorylated active-site intermediate.</text>
</comment>
<comment type="catalytic activity">
    <reaction evidence="1">
        <text>a 2'-deoxyribonucleoside 5'-diphosphate + ATP = a 2'-deoxyribonucleoside 5'-triphosphate + ADP</text>
        <dbReference type="Rhea" id="RHEA:44640"/>
        <dbReference type="ChEBI" id="CHEBI:30616"/>
        <dbReference type="ChEBI" id="CHEBI:61560"/>
        <dbReference type="ChEBI" id="CHEBI:73316"/>
        <dbReference type="ChEBI" id="CHEBI:456216"/>
        <dbReference type="EC" id="2.7.4.6"/>
    </reaction>
</comment>
<comment type="catalytic activity">
    <reaction evidence="1">
        <text>a ribonucleoside 5'-diphosphate + ATP = a ribonucleoside 5'-triphosphate + ADP</text>
        <dbReference type="Rhea" id="RHEA:18113"/>
        <dbReference type="ChEBI" id="CHEBI:30616"/>
        <dbReference type="ChEBI" id="CHEBI:57930"/>
        <dbReference type="ChEBI" id="CHEBI:61557"/>
        <dbReference type="ChEBI" id="CHEBI:456216"/>
        <dbReference type="EC" id="2.7.4.6"/>
    </reaction>
</comment>
<comment type="cofactor">
    <cofactor evidence="1">
        <name>Mg(2+)</name>
        <dbReference type="ChEBI" id="CHEBI:18420"/>
    </cofactor>
</comment>
<comment type="subunit">
    <text evidence="1">Homotetramer.</text>
</comment>
<comment type="subcellular location">
    <subcellularLocation>
        <location evidence="1">Cytoplasm</location>
    </subcellularLocation>
</comment>
<comment type="similarity">
    <text evidence="1">Belongs to the NDK family.</text>
</comment>
<gene>
    <name evidence="1" type="primary">ndk</name>
    <name type="ordered locus">SUN_2052</name>
</gene>
<name>NDK_SULNB</name>
<accession>A6QBY4</accession>